<feature type="chain" id="PRO_1000015527" description="Deoxyuridine 5'-triphosphate nucleotidohydrolase">
    <location>
        <begin position="1"/>
        <end position="155"/>
    </location>
</feature>
<feature type="binding site" evidence="1">
    <location>
        <begin position="74"/>
        <end position="76"/>
    </location>
    <ligand>
        <name>substrate</name>
    </ligand>
</feature>
<feature type="binding site" evidence="1">
    <location>
        <position position="87"/>
    </location>
    <ligand>
        <name>substrate</name>
    </ligand>
</feature>
<feature type="binding site" evidence="1">
    <location>
        <begin position="91"/>
        <end position="93"/>
    </location>
    <ligand>
        <name>substrate</name>
    </ligand>
</feature>
<comment type="function">
    <text evidence="1">This enzyme is involved in nucleotide metabolism: it produces dUMP, the immediate precursor of thymidine nucleotides and it decreases the intracellular concentration of dUTP so that uracil cannot be incorporated into DNA.</text>
</comment>
<comment type="catalytic activity">
    <reaction evidence="1">
        <text>dUTP + H2O = dUMP + diphosphate + H(+)</text>
        <dbReference type="Rhea" id="RHEA:10248"/>
        <dbReference type="ChEBI" id="CHEBI:15377"/>
        <dbReference type="ChEBI" id="CHEBI:15378"/>
        <dbReference type="ChEBI" id="CHEBI:33019"/>
        <dbReference type="ChEBI" id="CHEBI:61555"/>
        <dbReference type="ChEBI" id="CHEBI:246422"/>
        <dbReference type="EC" id="3.6.1.23"/>
    </reaction>
</comment>
<comment type="cofactor">
    <cofactor evidence="1">
        <name>Mg(2+)</name>
        <dbReference type="ChEBI" id="CHEBI:18420"/>
    </cofactor>
</comment>
<comment type="pathway">
    <text evidence="1">Pyrimidine metabolism; dUMP biosynthesis; dUMP from dCTP (dUTP route): step 2/2.</text>
</comment>
<comment type="similarity">
    <text evidence="1">Belongs to the dUTPase family.</text>
</comment>
<protein>
    <recommendedName>
        <fullName evidence="1">Deoxyuridine 5'-triphosphate nucleotidohydrolase</fullName>
        <shortName evidence="1">dUTPase</shortName>
        <ecNumber evidence="1">3.6.1.23</ecNumber>
    </recommendedName>
    <alternativeName>
        <fullName evidence="1">dUTP pyrophosphatase</fullName>
    </alternativeName>
</protein>
<sequence length="155" mass="16298">MSTPTQSLQVKLLDPRFGDLWPLPAYATESSAGMDLRAALEAPMTLQPGDAALIPSGIAIHLADPQLCAVILPRSGLGHRHGIVLGNGTGLIDADYQGPLLISTWNRGREAFTIEPGDRIAQLVILPIVRAGLQVVDTFVDSARGAGGFGHTGVR</sequence>
<name>DUT_XANOM</name>
<accession>Q2P8A8</accession>
<keyword id="KW-0378">Hydrolase</keyword>
<keyword id="KW-0460">Magnesium</keyword>
<keyword id="KW-0479">Metal-binding</keyword>
<keyword id="KW-0546">Nucleotide metabolism</keyword>
<dbReference type="EC" id="3.6.1.23" evidence="1"/>
<dbReference type="EMBL" id="AP008229">
    <property type="protein sequence ID" value="BAE67219.1"/>
    <property type="molecule type" value="Genomic_DNA"/>
</dbReference>
<dbReference type="RefSeq" id="WP_011407449.1">
    <property type="nucleotide sequence ID" value="NC_007705.1"/>
</dbReference>
<dbReference type="SMR" id="Q2P8A8"/>
<dbReference type="GeneID" id="77335825"/>
<dbReference type="KEGG" id="xom:XOO0464"/>
<dbReference type="HOGENOM" id="CLU_068508_1_1_6"/>
<dbReference type="UniPathway" id="UPA00610">
    <property type="reaction ID" value="UER00666"/>
</dbReference>
<dbReference type="GO" id="GO:0004170">
    <property type="term" value="F:dUTP diphosphatase activity"/>
    <property type="evidence" value="ECO:0007669"/>
    <property type="project" value="UniProtKB-UniRule"/>
</dbReference>
<dbReference type="GO" id="GO:0000287">
    <property type="term" value="F:magnesium ion binding"/>
    <property type="evidence" value="ECO:0007669"/>
    <property type="project" value="UniProtKB-UniRule"/>
</dbReference>
<dbReference type="GO" id="GO:0006226">
    <property type="term" value="P:dUMP biosynthetic process"/>
    <property type="evidence" value="ECO:0007669"/>
    <property type="project" value="UniProtKB-UniRule"/>
</dbReference>
<dbReference type="GO" id="GO:0046081">
    <property type="term" value="P:dUTP catabolic process"/>
    <property type="evidence" value="ECO:0007669"/>
    <property type="project" value="InterPro"/>
</dbReference>
<dbReference type="CDD" id="cd07557">
    <property type="entry name" value="trimeric_dUTPase"/>
    <property type="match status" value="1"/>
</dbReference>
<dbReference type="FunFam" id="2.70.40.10:FF:000002">
    <property type="entry name" value="dUTP diphosphatase"/>
    <property type="match status" value="1"/>
</dbReference>
<dbReference type="Gene3D" id="2.70.40.10">
    <property type="match status" value="1"/>
</dbReference>
<dbReference type="HAMAP" id="MF_00116">
    <property type="entry name" value="dUTPase_bact"/>
    <property type="match status" value="1"/>
</dbReference>
<dbReference type="InterPro" id="IPR008181">
    <property type="entry name" value="dUTPase"/>
</dbReference>
<dbReference type="InterPro" id="IPR029054">
    <property type="entry name" value="dUTPase-like"/>
</dbReference>
<dbReference type="InterPro" id="IPR036157">
    <property type="entry name" value="dUTPase-like_sf"/>
</dbReference>
<dbReference type="InterPro" id="IPR033704">
    <property type="entry name" value="dUTPase_trimeric"/>
</dbReference>
<dbReference type="NCBIfam" id="TIGR00576">
    <property type="entry name" value="dut"/>
    <property type="match status" value="1"/>
</dbReference>
<dbReference type="NCBIfam" id="NF001862">
    <property type="entry name" value="PRK00601.1"/>
    <property type="match status" value="1"/>
</dbReference>
<dbReference type="PANTHER" id="PTHR11241">
    <property type="entry name" value="DEOXYURIDINE 5'-TRIPHOSPHATE NUCLEOTIDOHYDROLASE"/>
    <property type="match status" value="1"/>
</dbReference>
<dbReference type="PANTHER" id="PTHR11241:SF0">
    <property type="entry name" value="DEOXYURIDINE 5'-TRIPHOSPHATE NUCLEOTIDOHYDROLASE"/>
    <property type="match status" value="1"/>
</dbReference>
<dbReference type="Pfam" id="PF00692">
    <property type="entry name" value="dUTPase"/>
    <property type="match status" value="1"/>
</dbReference>
<dbReference type="SUPFAM" id="SSF51283">
    <property type="entry name" value="dUTPase-like"/>
    <property type="match status" value="1"/>
</dbReference>
<reference key="1">
    <citation type="journal article" date="2005" name="Jpn. Agric. Res. Q.">
        <title>Genome sequence of Xanthomonas oryzae pv. oryzae suggests contribution of large numbers of effector genes and insertion sequences to its race diversity.</title>
        <authorList>
            <person name="Ochiai H."/>
            <person name="Inoue Y."/>
            <person name="Takeya M."/>
            <person name="Sasaki A."/>
            <person name="Kaku H."/>
        </authorList>
    </citation>
    <scope>NUCLEOTIDE SEQUENCE [LARGE SCALE GENOMIC DNA]</scope>
    <source>
        <strain>MAFF 311018</strain>
    </source>
</reference>
<organism>
    <name type="scientific">Xanthomonas oryzae pv. oryzae (strain MAFF 311018)</name>
    <dbReference type="NCBI Taxonomy" id="342109"/>
    <lineage>
        <taxon>Bacteria</taxon>
        <taxon>Pseudomonadati</taxon>
        <taxon>Pseudomonadota</taxon>
        <taxon>Gammaproteobacteria</taxon>
        <taxon>Lysobacterales</taxon>
        <taxon>Lysobacteraceae</taxon>
        <taxon>Xanthomonas</taxon>
    </lineage>
</organism>
<gene>
    <name evidence="1" type="primary">dut</name>
    <name type="ordered locus">XOO0464</name>
</gene>
<proteinExistence type="inferred from homology"/>
<evidence type="ECO:0000255" key="1">
    <source>
        <dbReference type="HAMAP-Rule" id="MF_00116"/>
    </source>
</evidence>